<proteinExistence type="inferred from homology"/>
<gene>
    <name evidence="1" type="primary">sucC</name>
    <name type="ordered locus">Nham_0544</name>
</gene>
<accession>Q1QQR3</accession>
<reference key="1">
    <citation type="submission" date="2006-03" db="EMBL/GenBank/DDBJ databases">
        <title>Complete sequence of chromosome of Nitrobacter hamburgensis X14.</title>
        <authorList>
            <consortium name="US DOE Joint Genome Institute"/>
            <person name="Copeland A."/>
            <person name="Lucas S."/>
            <person name="Lapidus A."/>
            <person name="Barry K."/>
            <person name="Detter J.C."/>
            <person name="Glavina del Rio T."/>
            <person name="Hammon N."/>
            <person name="Israni S."/>
            <person name="Dalin E."/>
            <person name="Tice H."/>
            <person name="Pitluck S."/>
            <person name="Chain P."/>
            <person name="Malfatti S."/>
            <person name="Shin M."/>
            <person name="Vergez L."/>
            <person name="Schmutz J."/>
            <person name="Larimer F."/>
            <person name="Land M."/>
            <person name="Hauser L."/>
            <person name="Kyrpides N."/>
            <person name="Ivanova N."/>
            <person name="Ward B."/>
            <person name="Arp D."/>
            <person name="Klotz M."/>
            <person name="Stein L."/>
            <person name="O'Mullan G."/>
            <person name="Starkenburg S."/>
            <person name="Sayavedra L."/>
            <person name="Poret-Peterson A.T."/>
            <person name="Gentry M.E."/>
            <person name="Bruce D."/>
            <person name="Richardson P."/>
        </authorList>
    </citation>
    <scope>NUCLEOTIDE SEQUENCE [LARGE SCALE GENOMIC DNA]</scope>
    <source>
        <strain>DSM 10229 / NCIMB 13809 / X14</strain>
    </source>
</reference>
<protein>
    <recommendedName>
        <fullName evidence="1">Succinate--CoA ligase [ADP-forming] subunit beta</fullName>
        <ecNumber evidence="1">6.2.1.5</ecNumber>
    </recommendedName>
    <alternativeName>
        <fullName evidence="1">Succinyl-CoA synthetase subunit beta</fullName>
        <shortName evidence="1">SCS-beta</shortName>
    </alternativeName>
</protein>
<organism>
    <name type="scientific">Nitrobacter hamburgensis (strain DSM 10229 / NCIMB 13809 / X14)</name>
    <dbReference type="NCBI Taxonomy" id="323097"/>
    <lineage>
        <taxon>Bacteria</taxon>
        <taxon>Pseudomonadati</taxon>
        <taxon>Pseudomonadota</taxon>
        <taxon>Alphaproteobacteria</taxon>
        <taxon>Hyphomicrobiales</taxon>
        <taxon>Nitrobacteraceae</taxon>
        <taxon>Nitrobacter</taxon>
    </lineage>
</organism>
<feature type="chain" id="PRO_1000082141" description="Succinate--CoA ligase [ADP-forming] subunit beta">
    <location>
        <begin position="1"/>
        <end position="397"/>
    </location>
</feature>
<feature type="domain" description="ATP-grasp" evidence="1">
    <location>
        <begin position="9"/>
        <end position="254"/>
    </location>
</feature>
<feature type="binding site" evidence="1">
    <location>
        <position position="46"/>
    </location>
    <ligand>
        <name>ATP</name>
        <dbReference type="ChEBI" id="CHEBI:30616"/>
    </ligand>
</feature>
<feature type="binding site" evidence="1">
    <location>
        <begin position="53"/>
        <end position="55"/>
    </location>
    <ligand>
        <name>ATP</name>
        <dbReference type="ChEBI" id="CHEBI:30616"/>
    </ligand>
</feature>
<feature type="binding site" evidence="1">
    <location>
        <position position="109"/>
    </location>
    <ligand>
        <name>ATP</name>
        <dbReference type="ChEBI" id="CHEBI:30616"/>
    </ligand>
</feature>
<feature type="binding site" evidence="1">
    <location>
        <position position="112"/>
    </location>
    <ligand>
        <name>ATP</name>
        <dbReference type="ChEBI" id="CHEBI:30616"/>
    </ligand>
</feature>
<feature type="binding site" evidence="1">
    <location>
        <position position="117"/>
    </location>
    <ligand>
        <name>ATP</name>
        <dbReference type="ChEBI" id="CHEBI:30616"/>
    </ligand>
</feature>
<feature type="binding site" evidence="1">
    <location>
        <position position="209"/>
    </location>
    <ligand>
        <name>Mg(2+)</name>
        <dbReference type="ChEBI" id="CHEBI:18420"/>
    </ligand>
</feature>
<feature type="binding site" evidence="1">
    <location>
        <position position="223"/>
    </location>
    <ligand>
        <name>Mg(2+)</name>
        <dbReference type="ChEBI" id="CHEBI:18420"/>
    </ligand>
</feature>
<feature type="binding site" evidence="1">
    <location>
        <position position="274"/>
    </location>
    <ligand>
        <name>substrate</name>
        <note>ligand shared with subunit alpha</note>
    </ligand>
</feature>
<feature type="binding site" evidence="1">
    <location>
        <begin position="331"/>
        <end position="333"/>
    </location>
    <ligand>
        <name>substrate</name>
        <note>ligand shared with subunit alpha</note>
    </ligand>
</feature>
<keyword id="KW-0067">ATP-binding</keyword>
<keyword id="KW-0436">Ligase</keyword>
<keyword id="KW-0460">Magnesium</keyword>
<keyword id="KW-0479">Metal-binding</keyword>
<keyword id="KW-0547">Nucleotide-binding</keyword>
<keyword id="KW-1185">Reference proteome</keyword>
<keyword id="KW-0816">Tricarboxylic acid cycle</keyword>
<comment type="function">
    <text evidence="1">Succinyl-CoA synthetase functions in the citric acid cycle (TCA), coupling the hydrolysis of succinyl-CoA to the synthesis of either ATP or GTP and thus represents the only step of substrate-level phosphorylation in the TCA. The beta subunit provides nucleotide specificity of the enzyme and binds the substrate succinate, while the binding sites for coenzyme A and phosphate are found in the alpha subunit.</text>
</comment>
<comment type="catalytic activity">
    <reaction evidence="1">
        <text>succinate + ATP + CoA = succinyl-CoA + ADP + phosphate</text>
        <dbReference type="Rhea" id="RHEA:17661"/>
        <dbReference type="ChEBI" id="CHEBI:30031"/>
        <dbReference type="ChEBI" id="CHEBI:30616"/>
        <dbReference type="ChEBI" id="CHEBI:43474"/>
        <dbReference type="ChEBI" id="CHEBI:57287"/>
        <dbReference type="ChEBI" id="CHEBI:57292"/>
        <dbReference type="ChEBI" id="CHEBI:456216"/>
        <dbReference type="EC" id="6.2.1.5"/>
    </reaction>
    <physiologicalReaction direction="right-to-left" evidence="1">
        <dbReference type="Rhea" id="RHEA:17663"/>
    </physiologicalReaction>
</comment>
<comment type="catalytic activity">
    <reaction evidence="1">
        <text>GTP + succinate + CoA = succinyl-CoA + GDP + phosphate</text>
        <dbReference type="Rhea" id="RHEA:22120"/>
        <dbReference type="ChEBI" id="CHEBI:30031"/>
        <dbReference type="ChEBI" id="CHEBI:37565"/>
        <dbReference type="ChEBI" id="CHEBI:43474"/>
        <dbReference type="ChEBI" id="CHEBI:57287"/>
        <dbReference type="ChEBI" id="CHEBI:57292"/>
        <dbReference type="ChEBI" id="CHEBI:58189"/>
    </reaction>
    <physiologicalReaction direction="right-to-left" evidence="1">
        <dbReference type="Rhea" id="RHEA:22122"/>
    </physiologicalReaction>
</comment>
<comment type="cofactor">
    <cofactor evidence="1">
        <name>Mg(2+)</name>
        <dbReference type="ChEBI" id="CHEBI:18420"/>
    </cofactor>
    <text evidence="1">Binds 1 Mg(2+) ion per subunit.</text>
</comment>
<comment type="pathway">
    <text evidence="1">Carbohydrate metabolism; tricarboxylic acid cycle; succinate from succinyl-CoA (ligase route): step 1/1.</text>
</comment>
<comment type="subunit">
    <text evidence="1">Heterotetramer of two alpha and two beta subunits.</text>
</comment>
<comment type="similarity">
    <text evidence="1">Belongs to the succinate/malate CoA ligase beta subunit family.</text>
</comment>
<sequence>MNIHEYQAKALLREFGVPVSRGVPVLKASEAEAAAETLGGPVWVVKSQIHAGGRGKGKFKEASAGDKGGVRLAKSIDEVKQFASQMLGATLVTVQTGPAGKQVNRLYIEEGSDIDKEFYLSALVDRETSRVAFVVSTEGGVNIEDVAHTSPEKIVSFSVDPATGVMSHHGRTVAKALGLRGDLGKQAEKLVAQLYNAFIAKDMALLEINPLVVTRQGELRVLDAKVSFDDNALYRHPDAVALRDESEEDAKEIEASRFDLSYVALDGQIGCMVNGAGLAMATMDIIKLYGMSPANFLDVGGGATKDKVAAAFKIITADPNVKGILVNIFGGIMKCDVIAEGVVAAVKQVGLNVPLVVRLEGTNVDAGKKIIRESGLNVLPADDLDDAAQKIVKAVKG</sequence>
<name>SUCC_NITHX</name>
<dbReference type="EC" id="6.2.1.5" evidence="1"/>
<dbReference type="EMBL" id="CP000319">
    <property type="protein sequence ID" value="ABE61434.1"/>
    <property type="molecule type" value="Genomic_DNA"/>
</dbReference>
<dbReference type="RefSeq" id="WP_011509138.1">
    <property type="nucleotide sequence ID" value="NC_007964.1"/>
</dbReference>
<dbReference type="SMR" id="Q1QQR3"/>
<dbReference type="STRING" id="323097.Nham_0544"/>
<dbReference type="KEGG" id="nha:Nham_0544"/>
<dbReference type="eggNOG" id="COG0045">
    <property type="taxonomic scope" value="Bacteria"/>
</dbReference>
<dbReference type="HOGENOM" id="CLU_037430_0_2_5"/>
<dbReference type="OrthoDB" id="9802602at2"/>
<dbReference type="UniPathway" id="UPA00223">
    <property type="reaction ID" value="UER00999"/>
</dbReference>
<dbReference type="Proteomes" id="UP000001953">
    <property type="component" value="Chromosome"/>
</dbReference>
<dbReference type="GO" id="GO:0005829">
    <property type="term" value="C:cytosol"/>
    <property type="evidence" value="ECO:0007669"/>
    <property type="project" value="TreeGrafter"/>
</dbReference>
<dbReference type="GO" id="GO:0042709">
    <property type="term" value="C:succinate-CoA ligase complex"/>
    <property type="evidence" value="ECO:0007669"/>
    <property type="project" value="TreeGrafter"/>
</dbReference>
<dbReference type="GO" id="GO:0005524">
    <property type="term" value="F:ATP binding"/>
    <property type="evidence" value="ECO:0007669"/>
    <property type="project" value="UniProtKB-UniRule"/>
</dbReference>
<dbReference type="GO" id="GO:0000287">
    <property type="term" value="F:magnesium ion binding"/>
    <property type="evidence" value="ECO:0007669"/>
    <property type="project" value="UniProtKB-UniRule"/>
</dbReference>
<dbReference type="GO" id="GO:0004775">
    <property type="term" value="F:succinate-CoA ligase (ADP-forming) activity"/>
    <property type="evidence" value="ECO:0007669"/>
    <property type="project" value="UniProtKB-UniRule"/>
</dbReference>
<dbReference type="GO" id="GO:0004776">
    <property type="term" value="F:succinate-CoA ligase (GDP-forming) activity"/>
    <property type="evidence" value="ECO:0007669"/>
    <property type="project" value="RHEA"/>
</dbReference>
<dbReference type="GO" id="GO:0006104">
    <property type="term" value="P:succinyl-CoA metabolic process"/>
    <property type="evidence" value="ECO:0007669"/>
    <property type="project" value="TreeGrafter"/>
</dbReference>
<dbReference type="GO" id="GO:0006099">
    <property type="term" value="P:tricarboxylic acid cycle"/>
    <property type="evidence" value="ECO:0007669"/>
    <property type="project" value="UniProtKB-UniRule"/>
</dbReference>
<dbReference type="FunFam" id="3.30.1490.20:FF:000002">
    <property type="entry name" value="Succinate--CoA ligase [ADP-forming] subunit beta"/>
    <property type="match status" value="1"/>
</dbReference>
<dbReference type="FunFam" id="3.30.470.20:FF:000002">
    <property type="entry name" value="Succinate--CoA ligase [ADP-forming] subunit beta"/>
    <property type="match status" value="1"/>
</dbReference>
<dbReference type="FunFam" id="3.40.50.261:FF:000001">
    <property type="entry name" value="Succinate--CoA ligase [ADP-forming] subunit beta"/>
    <property type="match status" value="1"/>
</dbReference>
<dbReference type="Gene3D" id="3.30.1490.20">
    <property type="entry name" value="ATP-grasp fold, A domain"/>
    <property type="match status" value="1"/>
</dbReference>
<dbReference type="Gene3D" id="3.30.470.20">
    <property type="entry name" value="ATP-grasp fold, B domain"/>
    <property type="match status" value="1"/>
</dbReference>
<dbReference type="Gene3D" id="3.40.50.261">
    <property type="entry name" value="Succinyl-CoA synthetase domains"/>
    <property type="match status" value="1"/>
</dbReference>
<dbReference type="HAMAP" id="MF_00558">
    <property type="entry name" value="Succ_CoA_beta"/>
    <property type="match status" value="1"/>
</dbReference>
<dbReference type="InterPro" id="IPR011761">
    <property type="entry name" value="ATP-grasp"/>
</dbReference>
<dbReference type="InterPro" id="IPR013650">
    <property type="entry name" value="ATP-grasp_succ-CoA_synth-type"/>
</dbReference>
<dbReference type="InterPro" id="IPR013815">
    <property type="entry name" value="ATP_grasp_subdomain_1"/>
</dbReference>
<dbReference type="InterPro" id="IPR005811">
    <property type="entry name" value="SUCC_ACL_C"/>
</dbReference>
<dbReference type="InterPro" id="IPR005809">
    <property type="entry name" value="Succ_CoA_ligase-like_bsu"/>
</dbReference>
<dbReference type="InterPro" id="IPR016102">
    <property type="entry name" value="Succinyl-CoA_synth-like"/>
</dbReference>
<dbReference type="NCBIfam" id="NF001913">
    <property type="entry name" value="PRK00696.1"/>
    <property type="match status" value="1"/>
</dbReference>
<dbReference type="NCBIfam" id="TIGR01016">
    <property type="entry name" value="sucCoAbeta"/>
    <property type="match status" value="1"/>
</dbReference>
<dbReference type="PANTHER" id="PTHR11815:SF10">
    <property type="entry name" value="SUCCINATE--COA LIGASE [GDP-FORMING] SUBUNIT BETA, MITOCHONDRIAL"/>
    <property type="match status" value="1"/>
</dbReference>
<dbReference type="PANTHER" id="PTHR11815">
    <property type="entry name" value="SUCCINYL-COA SYNTHETASE BETA CHAIN"/>
    <property type="match status" value="1"/>
</dbReference>
<dbReference type="Pfam" id="PF08442">
    <property type="entry name" value="ATP-grasp_2"/>
    <property type="match status" value="1"/>
</dbReference>
<dbReference type="Pfam" id="PF00549">
    <property type="entry name" value="Ligase_CoA"/>
    <property type="match status" value="1"/>
</dbReference>
<dbReference type="PIRSF" id="PIRSF001554">
    <property type="entry name" value="SucCS_beta"/>
    <property type="match status" value="1"/>
</dbReference>
<dbReference type="SUPFAM" id="SSF56059">
    <property type="entry name" value="Glutathione synthetase ATP-binding domain-like"/>
    <property type="match status" value="1"/>
</dbReference>
<dbReference type="SUPFAM" id="SSF52210">
    <property type="entry name" value="Succinyl-CoA synthetase domains"/>
    <property type="match status" value="1"/>
</dbReference>
<dbReference type="PROSITE" id="PS50975">
    <property type="entry name" value="ATP_GRASP"/>
    <property type="match status" value="1"/>
</dbReference>
<evidence type="ECO:0000255" key="1">
    <source>
        <dbReference type="HAMAP-Rule" id="MF_00558"/>
    </source>
</evidence>